<protein>
    <recommendedName>
        <fullName evidence="1">NADH-quinone oxidoreductase subunit B</fullName>
        <ecNumber evidence="1">7.1.1.-</ecNumber>
    </recommendedName>
    <alternativeName>
        <fullName evidence="1">NADH dehydrogenase I subunit B</fullName>
    </alternativeName>
    <alternativeName>
        <fullName evidence="1">NDH-1 subunit B</fullName>
    </alternativeName>
</protein>
<name>NUOB_SODGM</name>
<gene>
    <name evidence="1" type="primary">nuoB</name>
    <name type="ordered locus">SG1600</name>
</gene>
<proteinExistence type="inferred from homology"/>
<reference key="1">
    <citation type="journal article" date="2006" name="Genome Res.">
        <title>Massive genome erosion and functional adaptations provide insights into the symbiotic lifestyle of Sodalis glossinidius in the tsetse host.</title>
        <authorList>
            <person name="Toh H."/>
            <person name="Weiss B.L."/>
            <person name="Perkin S.A.H."/>
            <person name="Yamashita A."/>
            <person name="Oshima K."/>
            <person name="Hattori M."/>
            <person name="Aksoy S."/>
        </authorList>
    </citation>
    <scope>NUCLEOTIDE SEQUENCE [LARGE SCALE GENOMIC DNA]</scope>
    <source>
        <strain>morsitans</strain>
    </source>
</reference>
<sequence length="224" mass="25393">MDYTLTRAEPDGDNERYPLQKQEIVADPLEQHVHRSVYLGKLERALHNAVNWGRGNSLWPYNFGLSCCYVEMTTSFTAVHDVARFGSEVIRASPRQADFMVVAGTPFTKMAPVIQRLYDQMLEPKWVISMGACANSGGMYDIYSVVQGVDKFLPVDVYIPGCPPRPEAYIQALLLLKESIGKERRPLSWVVGDQGVYRANMESERQRKHGERIAVTHLRTSDEI</sequence>
<feature type="chain" id="PRO_0000376381" description="NADH-quinone oxidoreductase subunit B">
    <location>
        <begin position="1"/>
        <end position="224"/>
    </location>
</feature>
<feature type="binding site" evidence="1">
    <location>
        <position position="67"/>
    </location>
    <ligand>
        <name>[4Fe-4S] cluster</name>
        <dbReference type="ChEBI" id="CHEBI:49883"/>
    </ligand>
</feature>
<feature type="binding site" evidence="1">
    <location>
        <position position="68"/>
    </location>
    <ligand>
        <name>[4Fe-4S] cluster</name>
        <dbReference type="ChEBI" id="CHEBI:49883"/>
    </ligand>
</feature>
<feature type="binding site" evidence="1">
    <location>
        <position position="133"/>
    </location>
    <ligand>
        <name>[4Fe-4S] cluster</name>
        <dbReference type="ChEBI" id="CHEBI:49883"/>
    </ligand>
</feature>
<feature type="binding site" evidence="1">
    <location>
        <position position="162"/>
    </location>
    <ligand>
        <name>[4Fe-4S] cluster</name>
        <dbReference type="ChEBI" id="CHEBI:49883"/>
    </ligand>
</feature>
<comment type="function">
    <text evidence="1">NDH-1 shuttles electrons from NADH, via FMN and iron-sulfur (Fe-S) centers, to quinones in the respiratory chain. The immediate electron acceptor for the enzyme in this species is believed to be ubiquinone. Couples the redox reaction to proton translocation (for every two electrons transferred, four hydrogen ions are translocated across the cytoplasmic membrane), and thus conserves the redox energy in a proton gradient.</text>
</comment>
<comment type="catalytic activity">
    <reaction evidence="1">
        <text>a quinone + NADH + 5 H(+)(in) = a quinol + NAD(+) + 4 H(+)(out)</text>
        <dbReference type="Rhea" id="RHEA:57888"/>
        <dbReference type="ChEBI" id="CHEBI:15378"/>
        <dbReference type="ChEBI" id="CHEBI:24646"/>
        <dbReference type="ChEBI" id="CHEBI:57540"/>
        <dbReference type="ChEBI" id="CHEBI:57945"/>
        <dbReference type="ChEBI" id="CHEBI:132124"/>
    </reaction>
</comment>
<comment type="cofactor">
    <cofactor evidence="1">
        <name>[4Fe-4S] cluster</name>
        <dbReference type="ChEBI" id="CHEBI:49883"/>
    </cofactor>
    <text evidence="1">Binds 1 [4Fe-4S] cluster.</text>
</comment>
<comment type="subunit">
    <text evidence="1">NDH-1 is composed of 13 different subunits. Subunits NuoB, CD, E, F, and G constitute the peripheral sector of the complex.</text>
</comment>
<comment type="subcellular location">
    <subcellularLocation>
        <location evidence="1">Cell inner membrane</location>
        <topology evidence="1">Peripheral membrane protein</topology>
        <orientation evidence="1">Cytoplasmic side</orientation>
    </subcellularLocation>
</comment>
<comment type="similarity">
    <text evidence="1">Belongs to the complex I 20 kDa subunit family.</text>
</comment>
<organism>
    <name type="scientific">Sodalis glossinidius (strain morsitans)</name>
    <dbReference type="NCBI Taxonomy" id="343509"/>
    <lineage>
        <taxon>Bacteria</taxon>
        <taxon>Pseudomonadati</taxon>
        <taxon>Pseudomonadota</taxon>
        <taxon>Gammaproteobacteria</taxon>
        <taxon>Enterobacterales</taxon>
        <taxon>Bruguierivoracaceae</taxon>
        <taxon>Sodalis</taxon>
    </lineage>
</organism>
<accession>Q2NSK0</accession>
<dbReference type="EC" id="7.1.1.-" evidence="1"/>
<dbReference type="EMBL" id="AP008232">
    <property type="protein sequence ID" value="BAE74875.1"/>
    <property type="molecule type" value="Genomic_DNA"/>
</dbReference>
<dbReference type="RefSeq" id="WP_011411428.1">
    <property type="nucleotide sequence ID" value="NC_007712.1"/>
</dbReference>
<dbReference type="SMR" id="Q2NSK0"/>
<dbReference type="STRING" id="343509.SG1600"/>
<dbReference type="KEGG" id="sgl:SG1600"/>
<dbReference type="eggNOG" id="COG0377">
    <property type="taxonomic scope" value="Bacteria"/>
</dbReference>
<dbReference type="HOGENOM" id="CLU_055737_7_3_6"/>
<dbReference type="OrthoDB" id="9786737at2"/>
<dbReference type="BioCyc" id="SGLO343509:SGP1_RS14540-MONOMER"/>
<dbReference type="Proteomes" id="UP000001932">
    <property type="component" value="Chromosome"/>
</dbReference>
<dbReference type="GO" id="GO:0005886">
    <property type="term" value="C:plasma membrane"/>
    <property type="evidence" value="ECO:0007669"/>
    <property type="project" value="UniProtKB-SubCell"/>
</dbReference>
<dbReference type="GO" id="GO:0045271">
    <property type="term" value="C:respiratory chain complex I"/>
    <property type="evidence" value="ECO:0007669"/>
    <property type="project" value="TreeGrafter"/>
</dbReference>
<dbReference type="GO" id="GO:0051539">
    <property type="term" value="F:4 iron, 4 sulfur cluster binding"/>
    <property type="evidence" value="ECO:0007669"/>
    <property type="project" value="UniProtKB-KW"/>
</dbReference>
<dbReference type="GO" id="GO:0005506">
    <property type="term" value="F:iron ion binding"/>
    <property type="evidence" value="ECO:0007669"/>
    <property type="project" value="UniProtKB-UniRule"/>
</dbReference>
<dbReference type="GO" id="GO:0008137">
    <property type="term" value="F:NADH dehydrogenase (ubiquinone) activity"/>
    <property type="evidence" value="ECO:0007669"/>
    <property type="project" value="InterPro"/>
</dbReference>
<dbReference type="GO" id="GO:0050136">
    <property type="term" value="F:NADH:ubiquinone reductase (non-electrogenic) activity"/>
    <property type="evidence" value="ECO:0007669"/>
    <property type="project" value="UniProtKB-UniRule"/>
</dbReference>
<dbReference type="GO" id="GO:0048038">
    <property type="term" value="F:quinone binding"/>
    <property type="evidence" value="ECO:0007669"/>
    <property type="project" value="UniProtKB-KW"/>
</dbReference>
<dbReference type="GO" id="GO:0009060">
    <property type="term" value="P:aerobic respiration"/>
    <property type="evidence" value="ECO:0007669"/>
    <property type="project" value="TreeGrafter"/>
</dbReference>
<dbReference type="GO" id="GO:0015990">
    <property type="term" value="P:electron transport coupled proton transport"/>
    <property type="evidence" value="ECO:0007669"/>
    <property type="project" value="TreeGrafter"/>
</dbReference>
<dbReference type="FunFam" id="3.40.50.12280:FF:000002">
    <property type="entry name" value="NADH-quinone oxidoreductase subunit B"/>
    <property type="match status" value="1"/>
</dbReference>
<dbReference type="Gene3D" id="3.40.50.12280">
    <property type="match status" value="1"/>
</dbReference>
<dbReference type="HAMAP" id="MF_01356">
    <property type="entry name" value="NDH1_NuoB"/>
    <property type="match status" value="1"/>
</dbReference>
<dbReference type="InterPro" id="IPR006137">
    <property type="entry name" value="NADH_UbQ_OxRdtase-like_20kDa"/>
</dbReference>
<dbReference type="InterPro" id="IPR006138">
    <property type="entry name" value="NADH_UQ_OxRdtase_20Kd_su"/>
</dbReference>
<dbReference type="NCBIfam" id="TIGR01957">
    <property type="entry name" value="nuoB_fam"/>
    <property type="match status" value="1"/>
</dbReference>
<dbReference type="NCBIfam" id="NF005012">
    <property type="entry name" value="PRK06411.1"/>
    <property type="match status" value="1"/>
</dbReference>
<dbReference type="PANTHER" id="PTHR11995">
    <property type="entry name" value="NADH DEHYDROGENASE"/>
    <property type="match status" value="1"/>
</dbReference>
<dbReference type="PANTHER" id="PTHR11995:SF14">
    <property type="entry name" value="NADH DEHYDROGENASE [UBIQUINONE] IRON-SULFUR PROTEIN 7, MITOCHONDRIAL"/>
    <property type="match status" value="1"/>
</dbReference>
<dbReference type="Pfam" id="PF01058">
    <property type="entry name" value="Oxidored_q6"/>
    <property type="match status" value="1"/>
</dbReference>
<dbReference type="SUPFAM" id="SSF56770">
    <property type="entry name" value="HydA/Nqo6-like"/>
    <property type="match status" value="1"/>
</dbReference>
<dbReference type="PROSITE" id="PS01150">
    <property type="entry name" value="COMPLEX1_20K"/>
    <property type="match status" value="1"/>
</dbReference>
<keyword id="KW-0004">4Fe-4S</keyword>
<keyword id="KW-0997">Cell inner membrane</keyword>
<keyword id="KW-1003">Cell membrane</keyword>
<keyword id="KW-0408">Iron</keyword>
<keyword id="KW-0411">Iron-sulfur</keyword>
<keyword id="KW-0472">Membrane</keyword>
<keyword id="KW-0479">Metal-binding</keyword>
<keyword id="KW-0520">NAD</keyword>
<keyword id="KW-0874">Quinone</keyword>
<keyword id="KW-1278">Translocase</keyword>
<keyword id="KW-0813">Transport</keyword>
<keyword id="KW-0830">Ubiquinone</keyword>
<evidence type="ECO:0000255" key="1">
    <source>
        <dbReference type="HAMAP-Rule" id="MF_01356"/>
    </source>
</evidence>